<comment type="catalytic activity">
    <reaction>
        <text>tRNA(Pro) + L-proline + ATP = L-prolyl-tRNA(Pro) + AMP + diphosphate</text>
        <dbReference type="Rhea" id="RHEA:14305"/>
        <dbReference type="Rhea" id="RHEA-COMP:9700"/>
        <dbReference type="Rhea" id="RHEA-COMP:9702"/>
        <dbReference type="ChEBI" id="CHEBI:30616"/>
        <dbReference type="ChEBI" id="CHEBI:33019"/>
        <dbReference type="ChEBI" id="CHEBI:60039"/>
        <dbReference type="ChEBI" id="CHEBI:78442"/>
        <dbReference type="ChEBI" id="CHEBI:78532"/>
        <dbReference type="ChEBI" id="CHEBI:456215"/>
        <dbReference type="EC" id="6.1.1.15"/>
    </reaction>
</comment>
<comment type="subcellular location">
    <subcellularLocation>
        <location evidence="2">Mitochondrion</location>
    </subcellularLocation>
</comment>
<comment type="miscellaneous">
    <text evidence="1">Present with 477 molecules/cell in log phase SD medium.</text>
</comment>
<comment type="similarity">
    <text evidence="3">Belongs to the class-II aminoacyl-tRNA synthetase family.</text>
</comment>
<accession>P39965</accession>
<accession>D3DLZ3</accession>
<evidence type="ECO:0000269" key="1">
    <source>
    </source>
</evidence>
<evidence type="ECO:0000269" key="2">
    <source>
    </source>
</evidence>
<evidence type="ECO:0000305" key="3"/>
<gene>
    <name type="primary">AIM10</name>
    <name type="ordered locus">YER087W</name>
</gene>
<proteinExistence type="evidence at protein level"/>
<protein>
    <recommendedName>
        <fullName>Probable proline--tRNA ligase, mitochondrial</fullName>
        <ecNumber>6.1.1.15</ecNumber>
    </recommendedName>
    <alternativeName>
        <fullName>Altered inheritance rate of mitochondria protein 10</fullName>
    </alternativeName>
    <alternativeName>
        <fullName>Prolyl-tRNA synthetase</fullName>
        <shortName>ProRS</shortName>
    </alternativeName>
</protein>
<dbReference type="EC" id="6.1.1.15"/>
<dbReference type="EMBL" id="U18839">
    <property type="protein sequence ID" value="AAB64642.1"/>
    <property type="molecule type" value="Genomic_DNA"/>
</dbReference>
<dbReference type="EMBL" id="BK006939">
    <property type="protein sequence ID" value="DAA07747.1"/>
    <property type="molecule type" value="Genomic_DNA"/>
</dbReference>
<dbReference type="PIR" id="S50590">
    <property type="entry name" value="S50590"/>
</dbReference>
<dbReference type="RefSeq" id="NP_011010.1">
    <property type="nucleotide sequence ID" value="NM_001178978.1"/>
</dbReference>
<dbReference type="SMR" id="P39965"/>
<dbReference type="BioGRID" id="36831">
    <property type="interactions" value="87"/>
</dbReference>
<dbReference type="DIP" id="DIP-4922N"/>
<dbReference type="FunCoup" id="P39965">
    <property type="interactions" value="507"/>
</dbReference>
<dbReference type="IntAct" id="P39965">
    <property type="interactions" value="4"/>
</dbReference>
<dbReference type="MINT" id="P39965"/>
<dbReference type="STRING" id="4932.YER087W"/>
<dbReference type="iPTMnet" id="P39965"/>
<dbReference type="PaxDb" id="4932-YER087W"/>
<dbReference type="PeptideAtlas" id="P39965"/>
<dbReference type="EnsemblFungi" id="YER087W_mRNA">
    <property type="protein sequence ID" value="YER087W"/>
    <property type="gene ID" value="YER087W"/>
</dbReference>
<dbReference type="GeneID" id="856820"/>
<dbReference type="KEGG" id="sce:YER087W"/>
<dbReference type="AGR" id="SGD:S000000889"/>
<dbReference type="SGD" id="S000000889">
    <property type="gene designation" value="AIM10"/>
</dbReference>
<dbReference type="VEuPathDB" id="FungiDB:YER087W"/>
<dbReference type="eggNOG" id="KOG2324">
    <property type="taxonomic scope" value="Eukaryota"/>
</dbReference>
<dbReference type="GeneTree" id="ENSGT00390000010922"/>
<dbReference type="HOGENOM" id="CLU_016739_0_0_1"/>
<dbReference type="InParanoid" id="P39965"/>
<dbReference type="OMA" id="NCDYAAN"/>
<dbReference type="OrthoDB" id="10267474at2759"/>
<dbReference type="BioCyc" id="YEAST:G3O-30256-MONOMER"/>
<dbReference type="SABIO-RK" id="P39965"/>
<dbReference type="BioGRID-ORCS" id="856820">
    <property type="hits" value="2 hits in 10 CRISPR screens"/>
</dbReference>
<dbReference type="PRO" id="PR:P39965"/>
<dbReference type="Proteomes" id="UP000002311">
    <property type="component" value="Chromosome V"/>
</dbReference>
<dbReference type="RNAct" id="P39965">
    <property type="molecule type" value="protein"/>
</dbReference>
<dbReference type="GO" id="GO:0005739">
    <property type="term" value="C:mitochondrion"/>
    <property type="evidence" value="ECO:0007005"/>
    <property type="project" value="SGD"/>
</dbReference>
<dbReference type="GO" id="GO:0005524">
    <property type="term" value="F:ATP binding"/>
    <property type="evidence" value="ECO:0007669"/>
    <property type="project" value="UniProtKB-KW"/>
</dbReference>
<dbReference type="GO" id="GO:0004827">
    <property type="term" value="F:proline-tRNA ligase activity"/>
    <property type="evidence" value="ECO:0000250"/>
    <property type="project" value="SGD"/>
</dbReference>
<dbReference type="GO" id="GO:0006433">
    <property type="term" value="P:prolyl-tRNA aminoacylation"/>
    <property type="evidence" value="ECO:0000318"/>
    <property type="project" value="GO_Central"/>
</dbReference>
<dbReference type="CDD" id="cd00779">
    <property type="entry name" value="ProRS_core_prok"/>
    <property type="match status" value="1"/>
</dbReference>
<dbReference type="FunFam" id="3.30.930.10:FF:000131">
    <property type="entry name" value="Proline--tRNA ligase, cytoplasmic"/>
    <property type="match status" value="1"/>
</dbReference>
<dbReference type="FunFam" id="3.30.930.10:FF:000156">
    <property type="entry name" value="YER087W-like protein"/>
    <property type="match status" value="1"/>
</dbReference>
<dbReference type="Gene3D" id="3.40.50.800">
    <property type="entry name" value="Anticodon-binding domain"/>
    <property type="match status" value="1"/>
</dbReference>
<dbReference type="Gene3D" id="3.30.930.10">
    <property type="entry name" value="Bira Bifunctional Protein, Domain 2"/>
    <property type="match status" value="2"/>
</dbReference>
<dbReference type="InterPro" id="IPR002314">
    <property type="entry name" value="aa-tRNA-synt_IIb"/>
</dbReference>
<dbReference type="InterPro" id="IPR006195">
    <property type="entry name" value="aa-tRNA-synth_II"/>
</dbReference>
<dbReference type="InterPro" id="IPR045864">
    <property type="entry name" value="aa-tRNA-synth_II/BPL/LPL"/>
</dbReference>
<dbReference type="InterPro" id="IPR036621">
    <property type="entry name" value="Anticodon-bd_dom_sf"/>
</dbReference>
<dbReference type="InterPro" id="IPR002316">
    <property type="entry name" value="Pro-tRNA-ligase_IIa"/>
</dbReference>
<dbReference type="InterPro" id="IPR004500">
    <property type="entry name" value="Pro-tRNA-synth_IIa_bac-type"/>
</dbReference>
<dbReference type="InterPro" id="IPR050062">
    <property type="entry name" value="Pro-tRNA_synthetase"/>
</dbReference>
<dbReference type="InterPro" id="IPR033730">
    <property type="entry name" value="ProRS_core_prok"/>
</dbReference>
<dbReference type="NCBIfam" id="TIGR00409">
    <property type="entry name" value="proS_fam_II"/>
    <property type="match status" value="1"/>
</dbReference>
<dbReference type="PANTHER" id="PTHR42753">
    <property type="entry name" value="MITOCHONDRIAL RIBOSOME PROTEIN L39/PROLYL-TRNA LIGASE FAMILY MEMBER"/>
    <property type="match status" value="1"/>
</dbReference>
<dbReference type="PANTHER" id="PTHR42753:SF2">
    <property type="entry name" value="PROLINE--TRNA LIGASE"/>
    <property type="match status" value="1"/>
</dbReference>
<dbReference type="Pfam" id="PF00587">
    <property type="entry name" value="tRNA-synt_2b"/>
    <property type="match status" value="1"/>
</dbReference>
<dbReference type="PRINTS" id="PR01046">
    <property type="entry name" value="TRNASYNTHPRO"/>
</dbReference>
<dbReference type="SUPFAM" id="SSF52954">
    <property type="entry name" value="Class II aaRS ABD-related"/>
    <property type="match status" value="1"/>
</dbReference>
<dbReference type="SUPFAM" id="SSF55681">
    <property type="entry name" value="Class II aaRS and biotin synthetases"/>
    <property type="match status" value="2"/>
</dbReference>
<dbReference type="PROSITE" id="PS50862">
    <property type="entry name" value="AA_TRNA_LIGASE_II"/>
    <property type="match status" value="1"/>
</dbReference>
<keyword id="KW-0030">Aminoacyl-tRNA synthetase</keyword>
<keyword id="KW-0067">ATP-binding</keyword>
<keyword id="KW-0436">Ligase</keyword>
<keyword id="KW-0496">Mitochondrion</keyword>
<keyword id="KW-0547">Nucleotide-binding</keyword>
<keyword id="KW-0648">Protein biosynthesis</keyword>
<keyword id="KW-1185">Reference proteome</keyword>
<feature type="chain" id="PRO_0000139354" description="Probable proline--tRNA ligase, mitochondrial">
    <location>
        <begin position="1"/>
        <end position="576"/>
    </location>
</feature>
<name>SYPM_YEAST</name>
<reference key="1">
    <citation type="journal article" date="1997" name="Nature">
        <title>The nucleotide sequence of Saccharomyces cerevisiae chromosome V.</title>
        <authorList>
            <person name="Dietrich F.S."/>
            <person name="Mulligan J.T."/>
            <person name="Hennessy K.M."/>
            <person name="Yelton M.A."/>
            <person name="Allen E."/>
            <person name="Araujo R."/>
            <person name="Aviles E."/>
            <person name="Berno A."/>
            <person name="Brennan T."/>
            <person name="Carpenter J."/>
            <person name="Chen E."/>
            <person name="Cherry J.M."/>
            <person name="Chung E."/>
            <person name="Duncan M."/>
            <person name="Guzman E."/>
            <person name="Hartzell G."/>
            <person name="Hunicke-Smith S."/>
            <person name="Hyman R.W."/>
            <person name="Kayser A."/>
            <person name="Komp C."/>
            <person name="Lashkari D."/>
            <person name="Lew H."/>
            <person name="Lin D."/>
            <person name="Mosedale D."/>
            <person name="Nakahara K."/>
            <person name="Namath A."/>
            <person name="Norgren R."/>
            <person name="Oefner P."/>
            <person name="Oh C."/>
            <person name="Petel F.X."/>
            <person name="Roberts D."/>
            <person name="Sehl P."/>
            <person name="Schramm S."/>
            <person name="Shogren T."/>
            <person name="Smith V."/>
            <person name="Taylor P."/>
            <person name="Wei Y."/>
            <person name="Botstein D."/>
            <person name="Davis R.W."/>
        </authorList>
    </citation>
    <scope>NUCLEOTIDE SEQUENCE [LARGE SCALE GENOMIC DNA]</scope>
    <source>
        <strain>ATCC 204508 / S288c</strain>
    </source>
</reference>
<reference key="2">
    <citation type="journal article" date="2014" name="G3 (Bethesda)">
        <title>The reference genome sequence of Saccharomyces cerevisiae: Then and now.</title>
        <authorList>
            <person name="Engel S.R."/>
            <person name="Dietrich F.S."/>
            <person name="Fisk D.G."/>
            <person name="Binkley G."/>
            <person name="Balakrishnan R."/>
            <person name="Costanzo M.C."/>
            <person name="Dwight S.S."/>
            <person name="Hitz B.C."/>
            <person name="Karra K."/>
            <person name="Nash R.S."/>
            <person name="Weng S."/>
            <person name="Wong E.D."/>
            <person name="Lloyd P."/>
            <person name="Skrzypek M.S."/>
            <person name="Miyasato S.R."/>
            <person name="Simison M."/>
            <person name="Cherry J.M."/>
        </authorList>
    </citation>
    <scope>GENOME REANNOTATION</scope>
    <source>
        <strain>ATCC 204508 / S288c</strain>
    </source>
</reference>
<reference key="3">
    <citation type="journal article" date="2003" name="Nature">
        <title>Global analysis of protein expression in yeast.</title>
        <authorList>
            <person name="Ghaemmaghami S."/>
            <person name="Huh W.-K."/>
            <person name="Bower K."/>
            <person name="Howson R.W."/>
            <person name="Belle A."/>
            <person name="Dephoure N."/>
            <person name="O'Shea E.K."/>
            <person name="Weissman J.S."/>
        </authorList>
    </citation>
    <scope>LEVEL OF PROTEIN EXPRESSION [LARGE SCALE ANALYSIS]</scope>
</reference>
<reference key="4">
    <citation type="journal article" date="2006" name="J. Proteome Res.">
        <title>Toward the complete yeast mitochondrial proteome: multidimensional separation techniques for mitochondrial proteomics.</title>
        <authorList>
            <person name="Reinders J."/>
            <person name="Zahedi R.P."/>
            <person name="Pfanner N."/>
            <person name="Meisinger C."/>
            <person name="Sickmann A."/>
        </authorList>
    </citation>
    <scope>SUBCELLULAR LOCATION [LARGE SCALE ANALYSIS]</scope>
    <scope>IDENTIFICATION BY MASS SPECTROMETRY</scope>
</reference>
<organism>
    <name type="scientific">Saccharomyces cerevisiae (strain ATCC 204508 / S288c)</name>
    <name type="common">Baker's yeast</name>
    <dbReference type="NCBI Taxonomy" id="559292"/>
    <lineage>
        <taxon>Eukaryota</taxon>
        <taxon>Fungi</taxon>
        <taxon>Dikarya</taxon>
        <taxon>Ascomycota</taxon>
        <taxon>Saccharomycotina</taxon>
        <taxon>Saccharomycetes</taxon>
        <taxon>Saccharomycetales</taxon>
        <taxon>Saccharomycetaceae</taxon>
        <taxon>Saccharomyces</taxon>
    </lineage>
</organism>
<sequence length="576" mass="65880">MLKYRTLSRSCHIFHPKSLSNNTLKSETTQELLQTVGFVRRSQVGLFQWLPLGLRSLNKVSNAIRNRMDSDGGAIEVSLSAISSKALWQATDRWNNSELFKLKDSKGKQYCLTATCEEDITDLMKNYIASYKDMPITIYQMTRKYRDEIRPRGGILRGREFLMKDAYSFASNEEDAFASFQKLDDTYNKIFKDLKIPFVSAWADSGDIGGEFSKEFHLIHESGEDTLMSCKHCGDISTLDMSQSYPEKDGQYSGDVDCKYALTKDHSTLICFYYPKDRQLNWNLALNAMDKDIDLTLRNKPNDHVLQVYEKDNEDIMFSKILRVMDCRLNSKSNFPDFPLKKYLKNNFGQISDVSIVDAQENEICGKCEEGRLEPLKSIEVGHIFLLGNKYSKPLNVKFVDKENKNETFVHMGCYGIGVSRLVGAIAELGRDSNGFRWPAIMAPYKVSICTGPNNPENSQRLQDVKSELLNDPTMQNLQNDILDQFNEKLGIGARIKLSHAMGIPLCVIVGSKSWPNVEIEVRGIRWGEKDLWRKQFEKRCSELQWKCTKNEHGIEKHTVPIQHLAEVIGVLLKDM</sequence>